<accession>Q1MBW8</accession>
<dbReference type="EC" id="4.98.1.1" evidence="1"/>
<dbReference type="EMBL" id="AM236080">
    <property type="protein sequence ID" value="CAK09565.1"/>
    <property type="molecule type" value="Genomic_DNA"/>
</dbReference>
<dbReference type="RefSeq" id="WP_011653488.1">
    <property type="nucleotide sequence ID" value="NC_008380.1"/>
</dbReference>
<dbReference type="SMR" id="Q1MBW8"/>
<dbReference type="EnsemblBacteria" id="CAK09565">
    <property type="protein sequence ID" value="CAK09565"/>
    <property type="gene ID" value="RL4076"/>
</dbReference>
<dbReference type="KEGG" id="rle:RL4076"/>
<dbReference type="eggNOG" id="COG0276">
    <property type="taxonomic scope" value="Bacteria"/>
</dbReference>
<dbReference type="HOGENOM" id="CLU_018884_0_0_5"/>
<dbReference type="UniPathway" id="UPA00252">
    <property type="reaction ID" value="UER00325"/>
</dbReference>
<dbReference type="Proteomes" id="UP000006575">
    <property type="component" value="Chromosome"/>
</dbReference>
<dbReference type="GO" id="GO:0005737">
    <property type="term" value="C:cytoplasm"/>
    <property type="evidence" value="ECO:0007669"/>
    <property type="project" value="UniProtKB-SubCell"/>
</dbReference>
<dbReference type="GO" id="GO:0004325">
    <property type="term" value="F:ferrochelatase activity"/>
    <property type="evidence" value="ECO:0007669"/>
    <property type="project" value="UniProtKB-UniRule"/>
</dbReference>
<dbReference type="GO" id="GO:0046872">
    <property type="term" value="F:metal ion binding"/>
    <property type="evidence" value="ECO:0007669"/>
    <property type="project" value="UniProtKB-KW"/>
</dbReference>
<dbReference type="GO" id="GO:0006783">
    <property type="term" value="P:heme biosynthetic process"/>
    <property type="evidence" value="ECO:0007669"/>
    <property type="project" value="UniProtKB-UniRule"/>
</dbReference>
<dbReference type="CDD" id="cd00419">
    <property type="entry name" value="Ferrochelatase_C"/>
    <property type="match status" value="1"/>
</dbReference>
<dbReference type="CDD" id="cd03411">
    <property type="entry name" value="Ferrochelatase_N"/>
    <property type="match status" value="1"/>
</dbReference>
<dbReference type="FunFam" id="3.40.50.1400:FF:000002">
    <property type="entry name" value="Ferrochelatase"/>
    <property type="match status" value="1"/>
</dbReference>
<dbReference type="Gene3D" id="3.40.50.1400">
    <property type="match status" value="2"/>
</dbReference>
<dbReference type="HAMAP" id="MF_00323">
    <property type="entry name" value="Ferrochelatase"/>
    <property type="match status" value="1"/>
</dbReference>
<dbReference type="InterPro" id="IPR001015">
    <property type="entry name" value="Ferrochelatase"/>
</dbReference>
<dbReference type="InterPro" id="IPR019772">
    <property type="entry name" value="Ferrochelatase_AS"/>
</dbReference>
<dbReference type="InterPro" id="IPR033644">
    <property type="entry name" value="Ferrochelatase_C"/>
</dbReference>
<dbReference type="InterPro" id="IPR033659">
    <property type="entry name" value="Ferrochelatase_N"/>
</dbReference>
<dbReference type="NCBIfam" id="TIGR00109">
    <property type="entry name" value="hemH"/>
    <property type="match status" value="1"/>
</dbReference>
<dbReference type="PANTHER" id="PTHR11108">
    <property type="entry name" value="FERROCHELATASE"/>
    <property type="match status" value="1"/>
</dbReference>
<dbReference type="PANTHER" id="PTHR11108:SF1">
    <property type="entry name" value="FERROCHELATASE, MITOCHONDRIAL"/>
    <property type="match status" value="1"/>
</dbReference>
<dbReference type="Pfam" id="PF00762">
    <property type="entry name" value="Ferrochelatase"/>
    <property type="match status" value="1"/>
</dbReference>
<dbReference type="SUPFAM" id="SSF53800">
    <property type="entry name" value="Chelatase"/>
    <property type="match status" value="1"/>
</dbReference>
<dbReference type="PROSITE" id="PS00534">
    <property type="entry name" value="FERROCHELATASE"/>
    <property type="match status" value="1"/>
</dbReference>
<organism>
    <name type="scientific">Rhizobium johnstonii (strain DSM 114642 / LMG 32736 / 3841)</name>
    <name type="common">Rhizobium leguminosarum bv. viciae</name>
    <dbReference type="NCBI Taxonomy" id="216596"/>
    <lineage>
        <taxon>Bacteria</taxon>
        <taxon>Pseudomonadati</taxon>
        <taxon>Pseudomonadota</taxon>
        <taxon>Alphaproteobacteria</taxon>
        <taxon>Hyphomicrobiales</taxon>
        <taxon>Rhizobiaceae</taxon>
        <taxon>Rhizobium/Agrobacterium group</taxon>
        <taxon>Rhizobium</taxon>
        <taxon>Rhizobium johnstonii</taxon>
    </lineage>
</organism>
<keyword id="KW-0963">Cytoplasm</keyword>
<keyword id="KW-0350">Heme biosynthesis</keyword>
<keyword id="KW-0408">Iron</keyword>
<keyword id="KW-0456">Lyase</keyword>
<keyword id="KW-0479">Metal-binding</keyword>
<keyword id="KW-0627">Porphyrin biosynthesis</keyword>
<feature type="chain" id="PRO_1000019359" description="Ferrochelatase">
    <location>
        <begin position="1"/>
        <end position="344"/>
    </location>
</feature>
<feature type="binding site" evidence="1">
    <location>
        <position position="214"/>
    </location>
    <ligand>
        <name>Fe cation</name>
        <dbReference type="ChEBI" id="CHEBI:24875"/>
    </ligand>
</feature>
<feature type="binding site" evidence="1">
    <location>
        <position position="295"/>
    </location>
    <ligand>
        <name>Fe cation</name>
        <dbReference type="ChEBI" id="CHEBI:24875"/>
    </ligand>
</feature>
<sequence length="344" mass="39577">MTADISLRPADHPAVRFGKVGVLLVNLGTPDGTDYTSMRRYLREFLTDRRVIEWSPWKWYPILFGIVLNTRPQKVGKAYELIWNKEQNESYLRTYTRNQSELMAGRLKDLDNVKVDWAMRYGTPSIGSRIDALKEEGCDRIVLFPLYPQYAAATTATVNDKAFQKLLSMRWQPALRTVPAYHDDETYIEALAASVERHLSTLDWKPEMLLASFHGIPMSYFKQGDPYYCQCQKTGRLLRERLGLTKENFLVTFQSRFGPEEWLQPYTDKTVEKLAKDGVKRIAVINPGFVSDCLETLEEIAEQAAHSFHENGGEKFAHIPCLNDGEDGMKVLEKVVRRELQGWV</sequence>
<name>HEMH_RHIJ3</name>
<evidence type="ECO:0000255" key="1">
    <source>
        <dbReference type="HAMAP-Rule" id="MF_00323"/>
    </source>
</evidence>
<gene>
    <name evidence="1" type="primary">hemH</name>
    <name type="ordered locus">RL4076</name>
</gene>
<protein>
    <recommendedName>
        <fullName evidence="1">Ferrochelatase</fullName>
        <ecNumber evidence="1">4.98.1.1</ecNumber>
    </recommendedName>
    <alternativeName>
        <fullName evidence="1">Heme synthase</fullName>
    </alternativeName>
    <alternativeName>
        <fullName evidence="1">Protoheme ferro-lyase</fullName>
    </alternativeName>
</protein>
<reference key="1">
    <citation type="journal article" date="2006" name="Genome Biol.">
        <title>The genome of Rhizobium leguminosarum has recognizable core and accessory components.</title>
        <authorList>
            <person name="Young J.P.W."/>
            <person name="Crossman L.C."/>
            <person name="Johnston A.W.B."/>
            <person name="Thomson N.R."/>
            <person name="Ghazoui Z.F."/>
            <person name="Hull K.H."/>
            <person name="Wexler M."/>
            <person name="Curson A.R.J."/>
            <person name="Todd J.D."/>
            <person name="Poole P.S."/>
            <person name="Mauchline T.H."/>
            <person name="East A.K."/>
            <person name="Quail M.A."/>
            <person name="Churcher C."/>
            <person name="Arrowsmith C."/>
            <person name="Cherevach I."/>
            <person name="Chillingworth T."/>
            <person name="Clarke K."/>
            <person name="Cronin A."/>
            <person name="Davis P."/>
            <person name="Fraser A."/>
            <person name="Hance Z."/>
            <person name="Hauser H."/>
            <person name="Jagels K."/>
            <person name="Moule S."/>
            <person name="Mungall K."/>
            <person name="Norbertczak H."/>
            <person name="Rabbinowitsch E."/>
            <person name="Sanders M."/>
            <person name="Simmonds M."/>
            <person name="Whitehead S."/>
            <person name="Parkhill J."/>
        </authorList>
    </citation>
    <scope>NUCLEOTIDE SEQUENCE [LARGE SCALE GENOMIC DNA]</scope>
    <source>
        <strain>DSM 114642 / LMG 32736 / 3841</strain>
    </source>
</reference>
<comment type="function">
    <text evidence="1">Catalyzes the ferrous insertion into protoporphyrin IX.</text>
</comment>
<comment type="catalytic activity">
    <reaction evidence="1">
        <text>heme b + 2 H(+) = protoporphyrin IX + Fe(2+)</text>
        <dbReference type="Rhea" id="RHEA:22584"/>
        <dbReference type="ChEBI" id="CHEBI:15378"/>
        <dbReference type="ChEBI" id="CHEBI:29033"/>
        <dbReference type="ChEBI" id="CHEBI:57306"/>
        <dbReference type="ChEBI" id="CHEBI:60344"/>
        <dbReference type="EC" id="4.98.1.1"/>
    </reaction>
</comment>
<comment type="pathway">
    <text evidence="1">Porphyrin-containing compound metabolism; protoheme biosynthesis; protoheme from protoporphyrin-IX: step 1/1.</text>
</comment>
<comment type="subcellular location">
    <subcellularLocation>
        <location evidence="1">Cytoplasm</location>
    </subcellularLocation>
</comment>
<comment type="similarity">
    <text evidence="1">Belongs to the ferrochelatase family.</text>
</comment>
<proteinExistence type="inferred from homology"/>